<evidence type="ECO:0000250" key="1">
    <source>
        <dbReference type="UniProtKB" id="E2ASG4"/>
    </source>
</evidence>
<evidence type="ECO:0000255" key="2"/>
<evidence type="ECO:0000255" key="3">
    <source>
        <dbReference type="PROSITE-ProRule" id="PRU00498"/>
    </source>
</evidence>
<evidence type="ECO:0000269" key="4">
    <source>
    </source>
</evidence>
<evidence type="ECO:0000269" key="5">
    <source>
    </source>
</evidence>
<evidence type="ECO:0000269" key="6">
    <source>
    </source>
</evidence>
<evidence type="ECO:0000269" key="7">
    <source>
    </source>
</evidence>
<evidence type="ECO:0000269" key="8">
    <source>
    </source>
</evidence>
<evidence type="ECO:0000303" key="9">
    <source>
    </source>
</evidence>
<evidence type="ECO:0000305" key="10"/>
<evidence type="ECO:0000305" key="11">
    <source>
    </source>
</evidence>
<evidence type="ECO:0000312" key="12">
    <source>
        <dbReference type="EMBL" id="AAO15386.1"/>
    </source>
</evidence>
<evidence type="ECO:0000312" key="13">
    <source>
        <dbReference type="EMBL" id="ABV82333.1"/>
    </source>
</evidence>
<evidence type="ECO:0000312" key="14">
    <source>
        <dbReference type="EMBL" id="DAA02335.1"/>
    </source>
</evidence>
<evidence type="ECO:0000312" key="15">
    <source>
        <dbReference type="FlyBase" id="FBgn0053527"/>
    </source>
</evidence>
<evidence type="ECO:0000312" key="16">
    <source>
        <dbReference type="Proteomes" id="UP000000803"/>
    </source>
</evidence>
<proteinExistence type="evidence at protein level"/>
<gene>
    <name evidence="15" type="primary">SIFa</name>
    <name evidence="15" type="synonym">IFa</name>
    <name evidence="15" type="ORF">CG33527</name>
</gene>
<reference evidence="12" key="1">
    <citation type="submission" date="2001-05" db="EMBL/GenBank/DDBJ databases">
        <title>Identification of the drosophila neuropeptide IFamide and its cDNA.</title>
        <authorList>
            <person name="Terhzaz S."/>
            <person name="Veenstra J.A."/>
        </authorList>
    </citation>
    <scope>NUCLEOTIDE SEQUENCE [MRNA]</scope>
</reference>
<reference evidence="16" key="2">
    <citation type="journal article" date="2000" name="Science">
        <title>The genome sequence of Drosophila melanogaster.</title>
        <authorList>
            <person name="Adams M.D."/>
            <person name="Celniker S.E."/>
            <person name="Holt R.A."/>
            <person name="Evans C.A."/>
            <person name="Gocayne J.D."/>
            <person name="Amanatides P.G."/>
            <person name="Scherer S.E."/>
            <person name="Li P.W."/>
            <person name="Hoskins R.A."/>
            <person name="Galle R.F."/>
            <person name="George R.A."/>
            <person name="Lewis S.E."/>
            <person name="Richards S."/>
            <person name="Ashburner M."/>
            <person name="Henderson S.N."/>
            <person name="Sutton G.G."/>
            <person name="Wortman J.R."/>
            <person name="Yandell M.D."/>
            <person name="Zhang Q."/>
            <person name="Chen L.X."/>
            <person name="Brandon R.C."/>
            <person name="Rogers Y.-H.C."/>
            <person name="Blazej R.G."/>
            <person name="Champe M."/>
            <person name="Pfeiffer B.D."/>
            <person name="Wan K.H."/>
            <person name="Doyle C."/>
            <person name="Baxter E.G."/>
            <person name="Helt G."/>
            <person name="Nelson C.R."/>
            <person name="Miklos G.L.G."/>
            <person name="Abril J.F."/>
            <person name="Agbayani A."/>
            <person name="An H.-J."/>
            <person name="Andrews-Pfannkoch C."/>
            <person name="Baldwin D."/>
            <person name="Ballew R.M."/>
            <person name="Basu A."/>
            <person name="Baxendale J."/>
            <person name="Bayraktaroglu L."/>
            <person name="Beasley E.M."/>
            <person name="Beeson K.Y."/>
            <person name="Benos P.V."/>
            <person name="Berman B.P."/>
            <person name="Bhandari D."/>
            <person name="Bolshakov S."/>
            <person name="Borkova D."/>
            <person name="Botchan M.R."/>
            <person name="Bouck J."/>
            <person name="Brokstein P."/>
            <person name="Brottier P."/>
            <person name="Burtis K.C."/>
            <person name="Busam D.A."/>
            <person name="Butler H."/>
            <person name="Cadieu E."/>
            <person name="Center A."/>
            <person name="Chandra I."/>
            <person name="Cherry J.M."/>
            <person name="Cawley S."/>
            <person name="Dahlke C."/>
            <person name="Davenport L.B."/>
            <person name="Davies P."/>
            <person name="de Pablos B."/>
            <person name="Delcher A."/>
            <person name="Deng Z."/>
            <person name="Mays A.D."/>
            <person name="Dew I."/>
            <person name="Dietz S.M."/>
            <person name="Dodson K."/>
            <person name="Doup L.E."/>
            <person name="Downes M."/>
            <person name="Dugan-Rocha S."/>
            <person name="Dunkov B.C."/>
            <person name="Dunn P."/>
            <person name="Durbin K.J."/>
            <person name="Evangelista C.C."/>
            <person name="Ferraz C."/>
            <person name="Ferriera S."/>
            <person name="Fleischmann W."/>
            <person name="Fosler C."/>
            <person name="Gabrielian A.E."/>
            <person name="Garg N.S."/>
            <person name="Gelbart W.M."/>
            <person name="Glasser K."/>
            <person name="Glodek A."/>
            <person name="Gong F."/>
            <person name="Gorrell J.H."/>
            <person name="Gu Z."/>
            <person name="Guan P."/>
            <person name="Harris M."/>
            <person name="Harris N.L."/>
            <person name="Harvey D.A."/>
            <person name="Heiman T.J."/>
            <person name="Hernandez J.R."/>
            <person name="Houck J."/>
            <person name="Hostin D."/>
            <person name="Houston K.A."/>
            <person name="Howland T.J."/>
            <person name="Wei M.-H."/>
            <person name="Ibegwam C."/>
            <person name="Jalali M."/>
            <person name="Kalush F."/>
            <person name="Karpen G.H."/>
            <person name="Ke Z."/>
            <person name="Kennison J.A."/>
            <person name="Ketchum K.A."/>
            <person name="Kimmel B.E."/>
            <person name="Kodira C.D."/>
            <person name="Kraft C.L."/>
            <person name="Kravitz S."/>
            <person name="Kulp D."/>
            <person name="Lai Z."/>
            <person name="Lasko P."/>
            <person name="Lei Y."/>
            <person name="Levitsky A.A."/>
            <person name="Li J.H."/>
            <person name="Li Z."/>
            <person name="Liang Y."/>
            <person name="Lin X."/>
            <person name="Liu X."/>
            <person name="Mattei B."/>
            <person name="McIntosh T.C."/>
            <person name="McLeod M.P."/>
            <person name="McPherson D."/>
            <person name="Merkulov G."/>
            <person name="Milshina N.V."/>
            <person name="Mobarry C."/>
            <person name="Morris J."/>
            <person name="Moshrefi A."/>
            <person name="Mount S.M."/>
            <person name="Moy M."/>
            <person name="Murphy B."/>
            <person name="Murphy L."/>
            <person name="Muzny D.M."/>
            <person name="Nelson D.L."/>
            <person name="Nelson D.R."/>
            <person name="Nelson K.A."/>
            <person name="Nixon K."/>
            <person name="Nusskern D.R."/>
            <person name="Pacleb J.M."/>
            <person name="Palazzolo M."/>
            <person name="Pittman G.S."/>
            <person name="Pan S."/>
            <person name="Pollard J."/>
            <person name="Puri V."/>
            <person name="Reese M.G."/>
            <person name="Reinert K."/>
            <person name="Remington K."/>
            <person name="Saunders R.D.C."/>
            <person name="Scheeler F."/>
            <person name="Shen H."/>
            <person name="Shue B.C."/>
            <person name="Siden-Kiamos I."/>
            <person name="Simpson M."/>
            <person name="Skupski M.P."/>
            <person name="Smith T.J."/>
            <person name="Spier E."/>
            <person name="Spradling A.C."/>
            <person name="Stapleton M."/>
            <person name="Strong R."/>
            <person name="Sun E."/>
            <person name="Svirskas R."/>
            <person name="Tector C."/>
            <person name="Turner R."/>
            <person name="Venter E."/>
            <person name="Wang A.H."/>
            <person name="Wang X."/>
            <person name="Wang Z.-Y."/>
            <person name="Wassarman D.A."/>
            <person name="Weinstock G.M."/>
            <person name="Weissenbach J."/>
            <person name="Williams S.M."/>
            <person name="Woodage T."/>
            <person name="Worley K.C."/>
            <person name="Wu D."/>
            <person name="Yang S."/>
            <person name="Yao Q.A."/>
            <person name="Ye J."/>
            <person name="Yeh R.-F."/>
            <person name="Zaveri J.S."/>
            <person name="Zhan M."/>
            <person name="Zhang G."/>
            <person name="Zhao Q."/>
            <person name="Zheng L."/>
            <person name="Zheng X.H."/>
            <person name="Zhong F.N."/>
            <person name="Zhong W."/>
            <person name="Zhou X."/>
            <person name="Zhu S.C."/>
            <person name="Zhu X."/>
            <person name="Smith H.O."/>
            <person name="Gibbs R.A."/>
            <person name="Myers E.W."/>
            <person name="Rubin G.M."/>
            <person name="Venter J.C."/>
        </authorList>
    </citation>
    <scope>NUCLEOTIDE SEQUENCE [LARGE SCALE GENOMIC DNA]</scope>
    <source>
        <strain evidence="16">Berkeley</strain>
    </source>
</reference>
<reference evidence="16" key="3">
    <citation type="journal article" date="2002" name="Genome Biol.">
        <title>Annotation of the Drosophila melanogaster euchromatic genome: a systematic review.</title>
        <authorList>
            <person name="Misra S."/>
            <person name="Crosby M.A."/>
            <person name="Mungall C.J."/>
            <person name="Matthews B.B."/>
            <person name="Campbell K.S."/>
            <person name="Hradecky P."/>
            <person name="Huang Y."/>
            <person name="Kaminker J.S."/>
            <person name="Millburn G.H."/>
            <person name="Prochnik S.E."/>
            <person name="Smith C.D."/>
            <person name="Tupy J.L."/>
            <person name="Whitfield E.J."/>
            <person name="Bayraktaroglu L."/>
            <person name="Berman B.P."/>
            <person name="Bettencourt B.R."/>
            <person name="Celniker S.E."/>
            <person name="de Grey A.D.N.J."/>
            <person name="Drysdale R.A."/>
            <person name="Harris N.L."/>
            <person name="Richter J."/>
            <person name="Russo S."/>
            <person name="Schroeder A.J."/>
            <person name="Shu S.Q."/>
            <person name="Stapleton M."/>
            <person name="Yamada C."/>
            <person name="Ashburner M."/>
            <person name="Gelbart W.M."/>
            <person name="Rubin G.M."/>
            <person name="Lewis S.E."/>
        </authorList>
    </citation>
    <scope>GENOME REANNOTATION</scope>
    <source>
        <strain evidence="16">Berkeley</strain>
    </source>
</reference>
<reference evidence="13" key="4">
    <citation type="submission" date="2007-10" db="EMBL/GenBank/DDBJ databases">
        <authorList>
            <person name="Stapleton M."/>
            <person name="Carlson J."/>
            <person name="Frise E."/>
            <person name="Kapadia B."/>
            <person name="Park S."/>
            <person name="Wan K."/>
            <person name="Yu C."/>
            <person name="Celniker S."/>
        </authorList>
    </citation>
    <scope>NUCLEOTIDE SEQUENCE [LARGE SCALE MRNA]</scope>
</reference>
<reference evidence="14" key="5">
    <citation type="journal article" date="2003" name="Genome Biol.">
        <title>An integrated gene annotation and transcriptional profiling approach towards the full gene content of the Drosophila genome.</title>
        <authorList>
            <person name="Hild M."/>
            <person name="Beckmann B."/>
            <person name="Haas S.A."/>
            <person name="Koch B."/>
            <person name="Solovyev V."/>
            <person name="Busold C."/>
            <person name="Fellenberg K."/>
            <person name="Boutros M."/>
            <person name="Vingron M."/>
            <person name="Sauer F."/>
            <person name="Hoheisel J.D."/>
            <person name="Paro R."/>
        </authorList>
    </citation>
    <scope>IDENTIFICATION</scope>
</reference>
<reference evidence="10" key="6">
    <citation type="journal article" date="2004" name="Biochem. Biophys. Res. Commun.">
        <title>SIFamide is a highly conserved neuropeptide: a comparative study in different insect species.</title>
        <authorList>
            <person name="Verleyen P."/>
            <person name="Huybrechts J."/>
            <person name="Baggerman G."/>
            <person name="Van Lommel A."/>
            <person name="De Loof A."/>
            <person name="Schoofs L."/>
        </authorList>
    </citation>
    <scope>TISSUE SPECIFICITY</scope>
</reference>
<reference evidence="10" key="7">
    <citation type="journal article" date="2006" name="Biochem. Biophys. Res. Commun.">
        <title>Molecular identification of the first SIFamide receptor.</title>
        <authorList>
            <person name="Jorgensen L.M."/>
            <person name="Hauser F."/>
            <person name="Cazzamali G."/>
            <person name="Williamson M."/>
            <person name="Grimmelikhuijzen C.J."/>
        </authorList>
    </citation>
    <scope>FUNCTION</scope>
</reference>
<reference evidence="10" key="8">
    <citation type="journal article" date="2007" name="Biochem. Biophys. Res. Commun.">
        <title>The neuropeptide SIFamide modulates sexual behavior in Drosophila.</title>
        <authorList>
            <person name="Terhzaz S."/>
            <person name="Rosay P."/>
            <person name="Goodwin S.F."/>
            <person name="Veenstra J.A."/>
        </authorList>
    </citation>
    <scope>FUNCTION</scope>
    <scope>TISSUE SPECIFICITY</scope>
    <scope>DISRUPTION PHENOTYPE</scope>
</reference>
<reference evidence="10" key="9">
    <citation type="journal article" date="2014" name="Mol. Cells">
        <title>SIFamide and SIFamide receptor defines a novel neuropeptide signaling to promote sleep in Drosophila.</title>
        <authorList>
            <person name="Park S."/>
            <person name="Sonn J.Y."/>
            <person name="Oh Y."/>
            <person name="Lim C."/>
            <person name="Choe J."/>
        </authorList>
    </citation>
    <scope>FUNCTION</scope>
    <scope>DISRUPTION PHENOTYPE</scope>
</reference>
<reference evidence="10" key="10">
    <citation type="journal article" date="2015" name="Peptides">
        <title>SIFamide acts on fruitless neurons to modulate sexual behavior in Drosophila melanogaster.</title>
        <authorList>
            <person name="Sellami A."/>
            <person name="Veenstra J.A."/>
        </authorList>
    </citation>
    <scope>FUNCTION</scope>
</reference>
<protein>
    <recommendedName>
        <fullName evidence="9">Neuropeptide SIFamide</fullName>
    </recommendedName>
</protein>
<name>SIFA_DROME</name>
<comment type="function">
    <text evidence="5 6 7 8">Ligand for the neuropeptide SIFamide receptor (PubMed:16378592). Modulates sexual behavior by negatively regulating female receptivity to male courtship and by playing a role in male sex discrimination (PubMed:17126293, PubMed:26469541). Also involved in promoting sleep (PubMed:24658384).</text>
</comment>
<comment type="subcellular location">
    <subcellularLocation>
        <location evidence="11">Secreted</location>
    </subcellularLocation>
</comment>
<comment type="tissue specificity">
    <text evidence="4 6">Strongly expressed in two pairs of neurons in the pars intercerebralis (at protein level).</text>
</comment>
<comment type="disruption phenotype">
    <text evidence="6 7">RNAi-mediated knockdown in SIFa-expressing neurons causes normal male sexual activity towards virgin females but also vigorous courtship directed at other males and also leads to female hyper-receptivity with a dramatic decrease in copulation time (PubMed:17126293). It also causes reduced sleep and shortened sleep bout length (PubMed:24658384).</text>
</comment>
<comment type="similarity">
    <text evidence="10">Belongs to the FARP (FMRFamide related peptide) family.</text>
</comment>
<comment type="sequence caution" evidence="10">
    <conflict type="miscellaneous discrepancy">
        <sequence resource="EMBL-CDS" id="AAO15386"/>
    </conflict>
    <text>Probably cloning artifact.</text>
</comment>
<comment type="sequence caution" evidence="10">
    <conflict type="erroneous initiation">
        <sequence resource="EMBL-CDS" id="ABV82314"/>
    </conflict>
    <text>Extended N-terminus.</text>
</comment>
<comment type="sequence caution" evidence="10">
    <conflict type="erroneous initiation">
        <sequence resource="EMBL-CDS" id="ABV82352"/>
    </conflict>
    <text>Extended N-terminus.</text>
</comment>
<comment type="sequence caution" evidence="10">
    <conflict type="erroneous initiation">
        <sequence resource="EMBL-CDS" id="ACD81713"/>
    </conflict>
    <text>Extended N-terminus.</text>
</comment>
<feature type="signal peptide" evidence="2">
    <location>
        <begin position="1"/>
        <end position="26"/>
    </location>
</feature>
<feature type="peptide" id="PRO_5006746508" description="Neuropeptide SIFamide" evidence="1">
    <location>
        <begin position="27"/>
        <end position="38"/>
    </location>
</feature>
<feature type="propeptide" id="PRO_0000436206" evidence="1">
    <location>
        <begin position="42"/>
        <end position="72"/>
    </location>
</feature>
<feature type="modified residue" description="Phenylalanine amide" evidence="1">
    <location>
        <position position="38"/>
    </location>
</feature>
<feature type="glycosylation site" description="N-linked (GlcNAc...) asparagine" evidence="3">
    <location>
        <position position="34"/>
    </location>
</feature>
<accession>Q6IGX9</accession>
<accession>A8E6Z0</accession>
<accession>A8E728</accession>
<accession>B3DMR1</accession>
<accession>Q8IA34</accession>
<sequence length="72" mass="7901">MALRFTLTLLLVTILVAAILLGSSEAAYRKPPFNGSIFGKRNSLDYDSAKMSAVCEVAMEACPMWFPQNDSK</sequence>
<keyword id="KW-0027">Amidation</keyword>
<keyword id="KW-0085">Behavior</keyword>
<keyword id="KW-0325">Glycoprotein</keyword>
<keyword id="KW-0527">Neuropeptide</keyword>
<keyword id="KW-1185">Reference proteome</keyword>
<keyword id="KW-0964">Secreted</keyword>
<keyword id="KW-0732">Signal</keyword>
<dbReference type="EMBL" id="AF376801">
    <property type="protein sequence ID" value="AAO15386.1"/>
    <property type="status" value="ALT_SEQ"/>
    <property type="molecule type" value="mRNA"/>
</dbReference>
<dbReference type="EMBL" id="AE013599">
    <property type="protein sequence ID" value="AFH08249.1"/>
    <property type="molecule type" value="Genomic_DNA"/>
</dbReference>
<dbReference type="EMBL" id="BT030932">
    <property type="protein sequence ID" value="ABV82314.1"/>
    <property type="status" value="ALT_INIT"/>
    <property type="molecule type" value="mRNA"/>
</dbReference>
<dbReference type="EMBL" id="BT030951">
    <property type="protein sequence ID" value="ABV82333.1"/>
    <property type="molecule type" value="mRNA"/>
</dbReference>
<dbReference type="EMBL" id="BT030970">
    <property type="protein sequence ID" value="ABV82352.1"/>
    <property type="status" value="ALT_INIT"/>
    <property type="molecule type" value="mRNA"/>
</dbReference>
<dbReference type="EMBL" id="BT032699">
    <property type="protein sequence ID" value="ACD81713.1"/>
    <property type="status" value="ALT_INIT"/>
    <property type="molecule type" value="mRNA"/>
</dbReference>
<dbReference type="EMBL" id="BK003637">
    <property type="protein sequence ID" value="DAA02335.1"/>
    <property type="molecule type" value="Genomic_DNA"/>
</dbReference>
<dbReference type="RefSeq" id="NP_001246496.1">
    <property type="nucleotide sequence ID" value="NM_001259567.2"/>
</dbReference>
<dbReference type="FunCoup" id="Q6IGX9">
    <property type="interactions" value="96"/>
</dbReference>
<dbReference type="IntAct" id="Q6IGX9">
    <property type="interactions" value="5"/>
</dbReference>
<dbReference type="STRING" id="7227.FBpp0293592"/>
<dbReference type="GlyCosmos" id="Q6IGX9">
    <property type="glycosylation" value="1 site, No reported glycans"/>
</dbReference>
<dbReference type="GlyGen" id="Q6IGX9">
    <property type="glycosylation" value="1 site"/>
</dbReference>
<dbReference type="PaxDb" id="7227-FBpp0100173"/>
<dbReference type="EnsemblMetazoa" id="FBtr0305055">
    <property type="protein sequence ID" value="FBpp0293592"/>
    <property type="gene ID" value="FBgn0053527"/>
</dbReference>
<dbReference type="GeneID" id="3346202"/>
<dbReference type="KEGG" id="dme:Dmel_CG33527"/>
<dbReference type="AGR" id="FB:FBgn0053527"/>
<dbReference type="CTD" id="3346202"/>
<dbReference type="FlyBase" id="FBgn0053527">
    <property type="gene designation" value="SIFa"/>
</dbReference>
<dbReference type="VEuPathDB" id="VectorBase:FBgn0053527"/>
<dbReference type="HOGENOM" id="CLU_199255_0_0_1"/>
<dbReference type="InParanoid" id="Q6IGX9"/>
<dbReference type="OMA" id="SWFTQEQ"/>
<dbReference type="OrthoDB" id="8190180at2759"/>
<dbReference type="BioGRID-ORCS" id="3346202">
    <property type="hits" value="0 hits in 1 CRISPR screen"/>
</dbReference>
<dbReference type="GenomeRNAi" id="3346202"/>
<dbReference type="PRO" id="PR:Q6IGX9"/>
<dbReference type="Proteomes" id="UP000000803">
    <property type="component" value="Chromosome 2R"/>
</dbReference>
<dbReference type="Bgee" id="FBgn0053527">
    <property type="expression patterns" value="Expressed in adult octopaminergic neuron in brain and 28 other cell types or tissues"/>
</dbReference>
<dbReference type="ExpressionAtlas" id="Q6IGX9">
    <property type="expression patterns" value="baseline and differential"/>
</dbReference>
<dbReference type="GO" id="GO:0005615">
    <property type="term" value="C:extracellular space"/>
    <property type="evidence" value="ECO:0000305"/>
    <property type="project" value="FlyBase"/>
</dbReference>
<dbReference type="GO" id="GO:0005179">
    <property type="term" value="F:hormone activity"/>
    <property type="evidence" value="ECO:0000303"/>
    <property type="project" value="FlyBase"/>
</dbReference>
<dbReference type="GO" id="GO:0005184">
    <property type="term" value="F:neuropeptide hormone activity"/>
    <property type="evidence" value="ECO:0000250"/>
    <property type="project" value="FlyBase"/>
</dbReference>
<dbReference type="GO" id="GO:0071855">
    <property type="term" value="F:neuropeptide receptor binding"/>
    <property type="evidence" value="ECO:0000353"/>
    <property type="project" value="FlyBase"/>
</dbReference>
<dbReference type="GO" id="GO:0048018">
    <property type="term" value="F:receptor ligand activity"/>
    <property type="evidence" value="ECO:0000353"/>
    <property type="project" value="FlyBase"/>
</dbReference>
<dbReference type="GO" id="GO:0048047">
    <property type="term" value="P:mating behavior, sex discrimination"/>
    <property type="evidence" value="ECO:0000315"/>
    <property type="project" value="UniProtKB"/>
</dbReference>
<dbReference type="GO" id="GO:0007621">
    <property type="term" value="P:negative regulation of female receptivity"/>
    <property type="evidence" value="ECO:0000315"/>
    <property type="project" value="FlyBase"/>
</dbReference>
<dbReference type="GO" id="GO:0007218">
    <property type="term" value="P:neuropeptide signaling pathway"/>
    <property type="evidence" value="ECO:0000314"/>
    <property type="project" value="FlyBase"/>
</dbReference>
<dbReference type="GO" id="GO:0045938">
    <property type="term" value="P:positive regulation of circadian sleep/wake cycle, sleep"/>
    <property type="evidence" value="ECO:0000315"/>
    <property type="project" value="UniProtKB"/>
</dbReference>
<dbReference type="GO" id="GO:0042752">
    <property type="term" value="P:regulation of circadian rhythm"/>
    <property type="evidence" value="ECO:0000315"/>
    <property type="project" value="FlyBase"/>
</dbReference>
<organism evidence="14">
    <name type="scientific">Drosophila melanogaster</name>
    <name type="common">Fruit fly</name>
    <dbReference type="NCBI Taxonomy" id="7227"/>
    <lineage>
        <taxon>Eukaryota</taxon>
        <taxon>Metazoa</taxon>
        <taxon>Ecdysozoa</taxon>
        <taxon>Arthropoda</taxon>
        <taxon>Hexapoda</taxon>
        <taxon>Insecta</taxon>
        <taxon>Pterygota</taxon>
        <taxon>Neoptera</taxon>
        <taxon>Endopterygota</taxon>
        <taxon>Diptera</taxon>
        <taxon>Brachycera</taxon>
        <taxon>Muscomorpha</taxon>
        <taxon>Ephydroidea</taxon>
        <taxon>Drosophilidae</taxon>
        <taxon>Drosophila</taxon>
        <taxon>Sophophora</taxon>
    </lineage>
</organism>